<feature type="signal peptide" evidence="4">
    <location>
        <begin position="1"/>
        <end position="21"/>
    </location>
</feature>
<feature type="propeptide" id="PRO_0000380164" evidence="1">
    <location>
        <begin position="22"/>
        <end position="49"/>
    </location>
</feature>
<feature type="chain" id="PRO_0000380165" description="U5-theraphotoxin-Hs1d">
    <location>
        <begin position="50"/>
        <end position="81"/>
    </location>
</feature>
<feature type="disulfide bond" evidence="2">
    <location>
        <begin position="51"/>
        <end position="63"/>
    </location>
</feature>
<feature type="disulfide bond" evidence="2">
    <location>
        <begin position="56"/>
        <end position="68"/>
    </location>
</feature>
<feature type="disulfide bond" evidence="2">
    <location>
        <begin position="62"/>
        <end position="75"/>
    </location>
</feature>
<dbReference type="EMBL" id="EU195265">
    <property type="protein sequence ID" value="ABY77718.1"/>
    <property type="molecule type" value="mRNA"/>
</dbReference>
<dbReference type="ArachnoServer" id="AS000757">
    <property type="toxin name" value="U5-theraphotoxin-Hs1d"/>
</dbReference>
<dbReference type="GO" id="GO:0005576">
    <property type="term" value="C:extracellular region"/>
    <property type="evidence" value="ECO:0007669"/>
    <property type="project" value="UniProtKB-SubCell"/>
</dbReference>
<dbReference type="GO" id="GO:0030246">
    <property type="term" value="F:carbohydrate binding"/>
    <property type="evidence" value="ECO:0007669"/>
    <property type="project" value="UniProtKB-KW"/>
</dbReference>
<dbReference type="GO" id="GO:0008200">
    <property type="term" value="F:ion channel inhibitor activity"/>
    <property type="evidence" value="ECO:0007669"/>
    <property type="project" value="InterPro"/>
</dbReference>
<dbReference type="GO" id="GO:0090729">
    <property type="term" value="F:toxin activity"/>
    <property type="evidence" value="ECO:0007669"/>
    <property type="project" value="UniProtKB-KW"/>
</dbReference>
<dbReference type="InterPro" id="IPR011696">
    <property type="entry name" value="Huwentoxin-1"/>
</dbReference>
<dbReference type="InterPro" id="IPR013140">
    <property type="entry name" value="Huwentoxin_CS1"/>
</dbReference>
<dbReference type="Pfam" id="PF07740">
    <property type="entry name" value="Toxin_12"/>
    <property type="match status" value="1"/>
</dbReference>
<dbReference type="SUPFAM" id="SSF57059">
    <property type="entry name" value="omega toxin-like"/>
    <property type="match status" value="1"/>
</dbReference>
<dbReference type="PROSITE" id="PS60021">
    <property type="entry name" value="HWTX_1"/>
    <property type="match status" value="1"/>
</dbReference>
<proteinExistence type="evidence at transcript level"/>
<reference key="1">
    <citation type="journal article" date="2008" name="Toxicon">
        <title>Molecular diversification based on analysis of expressed sequence tags from the venom glands of the Chinese bird spider Ornithoctonus huwena.</title>
        <authorList>
            <person name="Jiang L."/>
            <person name="Peng L."/>
            <person name="Chen J."/>
            <person name="Zhang Y."/>
            <person name="Xiong X."/>
            <person name="Liang S."/>
        </authorList>
    </citation>
    <scope>NUCLEOTIDE SEQUENCE [MRNA]</scope>
</reference>
<evidence type="ECO:0000250" key="1"/>
<evidence type="ECO:0000250" key="2">
    <source>
        <dbReference type="UniProtKB" id="B3FIS6"/>
    </source>
</evidence>
<evidence type="ECO:0000250" key="3">
    <source>
        <dbReference type="UniProtKB" id="Q86C51"/>
    </source>
</evidence>
<evidence type="ECO:0000255" key="4"/>
<evidence type="ECO:0000305" key="5"/>
<organism>
    <name type="scientific">Cyriopagopus schmidti</name>
    <name type="common">Chinese bird spider</name>
    <name type="synonym">Haplopelma schmidti</name>
    <dbReference type="NCBI Taxonomy" id="29017"/>
    <lineage>
        <taxon>Eukaryota</taxon>
        <taxon>Metazoa</taxon>
        <taxon>Ecdysozoa</taxon>
        <taxon>Arthropoda</taxon>
        <taxon>Chelicerata</taxon>
        <taxon>Arachnida</taxon>
        <taxon>Araneae</taxon>
        <taxon>Mygalomorphae</taxon>
        <taxon>Theraphosidae</taxon>
        <taxon>Cyriopagopus</taxon>
    </lineage>
</organism>
<accession>B3FIS1</accession>
<sequence>MKTSMFLTLTGLVLLFVVCYASESEEKEFPKELLSSIFAADSDFKVEERGCLGDKCDYNNGCCSGYVCPRTWKWCVLAGPWRR</sequence>
<comment type="function">
    <text evidence="3">Agglutinates erythrocytes.</text>
</comment>
<comment type="subcellular location">
    <subcellularLocation>
        <location evidence="1">Secreted</location>
    </subcellularLocation>
</comment>
<comment type="tissue specificity">
    <text>Expressed by the venom gland.</text>
</comment>
<comment type="domain">
    <text>The presence of a 'disulfide through disulfide knot' structurally defines this protein as a knottin.</text>
</comment>
<comment type="similarity">
    <text evidence="5">Belongs to the neurotoxin 10 (Hwtx-1) family. 51 (Hntx-8) subfamily. Hntx-8 sub-subfamily.</text>
</comment>
<protein>
    <recommendedName>
        <fullName>U5-theraphotoxin-Hs1d</fullName>
        <shortName>U5-TRTX-Hs1d</shortName>
    </recommendedName>
    <alternativeName>
        <fullName>Lectin SHL-1a2</fullName>
    </alternativeName>
    <alternativeName>
        <fullName>Lectin SHL-Ia2</fullName>
    </alternativeName>
</protein>
<name>TXLD_CYRSC</name>
<keyword id="KW-0165">Cleavage on pair of basic residues</keyword>
<keyword id="KW-1015">Disulfide bond</keyword>
<keyword id="KW-0960">Knottin</keyword>
<keyword id="KW-0430">Lectin</keyword>
<keyword id="KW-0964">Secreted</keyword>
<keyword id="KW-0732">Signal</keyword>
<keyword id="KW-0800">Toxin</keyword>